<accession>B7FNA9</accession>
<organism>
    <name type="scientific">Medicago truncatula</name>
    <name type="common">Barrel medic</name>
    <name type="synonym">Medicago tribuloides</name>
    <dbReference type="NCBI Taxonomy" id="3880"/>
    <lineage>
        <taxon>Eukaryota</taxon>
        <taxon>Viridiplantae</taxon>
        <taxon>Streptophyta</taxon>
        <taxon>Embryophyta</taxon>
        <taxon>Tracheophyta</taxon>
        <taxon>Spermatophyta</taxon>
        <taxon>Magnoliopsida</taxon>
        <taxon>eudicotyledons</taxon>
        <taxon>Gunneridae</taxon>
        <taxon>Pentapetalae</taxon>
        <taxon>rosids</taxon>
        <taxon>fabids</taxon>
        <taxon>Fabales</taxon>
        <taxon>Fabaceae</taxon>
        <taxon>Papilionoideae</taxon>
        <taxon>50 kb inversion clade</taxon>
        <taxon>NPAAA clade</taxon>
        <taxon>Hologalegina</taxon>
        <taxon>IRL clade</taxon>
        <taxon>Trifolieae</taxon>
        <taxon>Medicago</taxon>
    </lineage>
</organism>
<evidence type="ECO:0000255" key="1">
    <source>
        <dbReference type="HAMAP-Rule" id="MF_03115"/>
    </source>
</evidence>
<proteinExistence type="evidence at transcript level"/>
<reference key="1">
    <citation type="submission" date="2008-12" db="EMBL/GenBank/DDBJ databases">
        <title>Medicago truncatula full length cDNA cloning project.</title>
        <authorList>
            <person name="Moskal W."/>
            <person name="Chan A."/>
            <person name="Cheung F."/>
            <person name="Xiao Y."/>
            <person name="Town C.D."/>
        </authorList>
    </citation>
    <scope>NUCLEOTIDE SEQUENCE [LARGE SCALE MRNA]</scope>
</reference>
<name>DRE2_MEDTR</name>
<feature type="chain" id="PRO_0000392335" description="Anamorsin homolog">
    <location>
        <begin position="1"/>
        <end position="265"/>
    </location>
</feature>
<feature type="region of interest" description="N-terminal SAM-like domain" evidence="1">
    <location>
        <begin position="1"/>
        <end position="147"/>
    </location>
</feature>
<feature type="region of interest" description="Linker" evidence="1">
    <location>
        <begin position="147"/>
        <end position="176"/>
    </location>
</feature>
<feature type="region of interest" description="Fe-S binding site A" evidence="1">
    <location>
        <begin position="186"/>
        <end position="200"/>
    </location>
</feature>
<feature type="region of interest" description="Fe-S binding site B" evidence="1">
    <location>
        <begin position="226"/>
        <end position="240"/>
    </location>
</feature>
<feature type="short sequence motif" description="Cx2C motif 1" evidence="1">
    <location>
        <begin position="226"/>
        <end position="229"/>
    </location>
</feature>
<feature type="short sequence motif" description="Cx2C motif 2" evidence="1">
    <location>
        <begin position="237"/>
        <end position="240"/>
    </location>
</feature>
<feature type="binding site" evidence="1">
    <location>
        <position position="186"/>
    </location>
    <ligand>
        <name>[2Fe-2S] cluster</name>
        <dbReference type="ChEBI" id="CHEBI:190135"/>
    </ligand>
</feature>
<feature type="binding site" evidence="1">
    <location>
        <position position="195"/>
    </location>
    <ligand>
        <name>[2Fe-2S] cluster</name>
        <dbReference type="ChEBI" id="CHEBI:190135"/>
    </ligand>
</feature>
<feature type="binding site" evidence="1">
    <location>
        <position position="198"/>
    </location>
    <ligand>
        <name>[2Fe-2S] cluster</name>
        <dbReference type="ChEBI" id="CHEBI:190135"/>
    </ligand>
</feature>
<feature type="binding site" evidence="1">
    <location>
        <position position="200"/>
    </location>
    <ligand>
        <name>[2Fe-2S] cluster</name>
        <dbReference type="ChEBI" id="CHEBI:190135"/>
    </ligand>
</feature>
<feature type="binding site" evidence="1">
    <location>
        <position position="226"/>
    </location>
    <ligand>
        <name>[4Fe-4S] cluster</name>
        <dbReference type="ChEBI" id="CHEBI:49883"/>
    </ligand>
</feature>
<feature type="binding site" evidence="1">
    <location>
        <position position="229"/>
    </location>
    <ligand>
        <name>[4Fe-4S] cluster</name>
        <dbReference type="ChEBI" id="CHEBI:49883"/>
    </ligand>
</feature>
<feature type="binding site" evidence="1">
    <location>
        <position position="237"/>
    </location>
    <ligand>
        <name>[4Fe-4S] cluster</name>
        <dbReference type="ChEBI" id="CHEBI:49883"/>
    </ligand>
</feature>
<feature type="binding site" evidence="1">
    <location>
        <position position="240"/>
    </location>
    <ligand>
        <name>[4Fe-4S] cluster</name>
        <dbReference type="ChEBI" id="CHEBI:49883"/>
    </ligand>
</feature>
<dbReference type="EMBL" id="BT053583">
    <property type="protein sequence ID" value="ACJ86242.1"/>
    <property type="molecule type" value="mRNA"/>
</dbReference>
<dbReference type="RefSeq" id="XP_003607208.1">
    <property type="nucleotide sequence ID" value="XM_003607160.4"/>
</dbReference>
<dbReference type="SMR" id="B7FNA9"/>
<dbReference type="PaxDb" id="3880-AES89405"/>
<dbReference type="EnsemblPlants" id="rna24031">
    <property type="protein sequence ID" value="RHN61556.1"/>
    <property type="gene ID" value="gene24031"/>
</dbReference>
<dbReference type="GeneID" id="11444383"/>
<dbReference type="Gramene" id="rna24031">
    <property type="protein sequence ID" value="RHN61556.1"/>
    <property type="gene ID" value="gene24031"/>
</dbReference>
<dbReference type="KEGG" id="mtr:11444383"/>
<dbReference type="eggNOG" id="KOG4020">
    <property type="taxonomic scope" value="Eukaryota"/>
</dbReference>
<dbReference type="HOGENOM" id="CLU_064393_0_0_1"/>
<dbReference type="OMA" id="ACKNCTW"/>
<dbReference type="OrthoDB" id="311633at2759"/>
<dbReference type="GO" id="GO:0005758">
    <property type="term" value="C:mitochondrial intermembrane space"/>
    <property type="evidence" value="ECO:0007669"/>
    <property type="project" value="UniProtKB-SubCell"/>
</dbReference>
<dbReference type="GO" id="GO:0051537">
    <property type="term" value="F:2 iron, 2 sulfur cluster binding"/>
    <property type="evidence" value="ECO:0007669"/>
    <property type="project" value="UniProtKB-UniRule"/>
</dbReference>
<dbReference type="GO" id="GO:0051539">
    <property type="term" value="F:4 iron, 4 sulfur cluster binding"/>
    <property type="evidence" value="ECO:0007669"/>
    <property type="project" value="UniProtKB-KW"/>
</dbReference>
<dbReference type="GO" id="GO:0009055">
    <property type="term" value="F:electron transfer activity"/>
    <property type="evidence" value="ECO:0007669"/>
    <property type="project" value="UniProtKB-UniRule"/>
</dbReference>
<dbReference type="GO" id="GO:0046872">
    <property type="term" value="F:metal ion binding"/>
    <property type="evidence" value="ECO:0007669"/>
    <property type="project" value="UniProtKB-KW"/>
</dbReference>
<dbReference type="GO" id="GO:0016226">
    <property type="term" value="P:iron-sulfur cluster assembly"/>
    <property type="evidence" value="ECO:0007669"/>
    <property type="project" value="UniProtKB-UniRule"/>
</dbReference>
<dbReference type="Gene3D" id="3.40.50.150">
    <property type="entry name" value="Vaccinia Virus protein VP39"/>
    <property type="match status" value="1"/>
</dbReference>
<dbReference type="HAMAP" id="MF_03115">
    <property type="entry name" value="Anamorsin"/>
    <property type="match status" value="1"/>
</dbReference>
<dbReference type="InterPro" id="IPR007785">
    <property type="entry name" value="Anamorsin"/>
</dbReference>
<dbReference type="InterPro" id="IPR046408">
    <property type="entry name" value="CIAPIN1"/>
</dbReference>
<dbReference type="InterPro" id="IPR029063">
    <property type="entry name" value="SAM-dependent_MTases_sf"/>
</dbReference>
<dbReference type="PANTHER" id="PTHR13273">
    <property type="entry name" value="ANAMORSIN"/>
    <property type="match status" value="1"/>
</dbReference>
<dbReference type="PANTHER" id="PTHR13273:SF14">
    <property type="entry name" value="ANAMORSIN"/>
    <property type="match status" value="1"/>
</dbReference>
<dbReference type="Pfam" id="PF05093">
    <property type="entry name" value="CIAPIN1"/>
    <property type="match status" value="1"/>
</dbReference>
<protein>
    <recommendedName>
        <fullName evidence="1">Anamorsin homolog</fullName>
    </recommendedName>
    <alternativeName>
        <fullName evidence="1">Fe-S cluster assembly protein DRE2 homolog</fullName>
    </alternativeName>
</protein>
<sequence length="265" mass="28305">MDAAKMYGAVLACTDEAVLPVSQVFDAIRELGNEGVEKLDPLVITSASSLSKFPVESSSVDLVVLIWKSLDFPIDQLTQEVLRVLKAGGTTLIRKSSQSAVGSGDKMIPDLENKLLLAGFSEIQALQSSVIKAKKPSWKIGSSFALKKVVKSSPKVQIDFDSDLIDENSLLSEEDLKKPELPSGDCEIGPTRKACKNCSCGRAEEEEKVLKLGLTAEQINNPQSACGSCGLGDAFRCSTCPYKGLPAFKMGEKVALSGNFLAADI</sequence>
<keyword id="KW-0001">2Fe-2S</keyword>
<keyword id="KW-0004">4Fe-4S</keyword>
<keyword id="KW-0963">Cytoplasm</keyword>
<keyword id="KW-0408">Iron</keyword>
<keyword id="KW-0411">Iron-sulfur</keyword>
<keyword id="KW-0479">Metal-binding</keyword>
<keyword id="KW-0496">Mitochondrion</keyword>
<comment type="function">
    <text evidence="1">Component of the cytosolic iron-sulfur (Fe-S) protein assembly (CIA) machinery. Required for the maturation of extramitochondrial Fe-S proteins. Part of an electron transfer chain functioning in an early step of cytosolic Fe-S biogenesis, facilitating the de novo assembly of a [4Fe-4S] cluster on the cytosolic Fe-S scaffold complex. Electrons are transferred from NADPH via a FAD- and FMN-containing diflavin oxidoreductase. Together with the diflavin oxidoreductase, also required for the assembly of the diferric tyrosyl radical cofactor of ribonucleotide reductase (RNR), probably by providing electrons for reduction during radical cofactor maturation in the catalytic small subunit.</text>
</comment>
<comment type="cofactor">
    <cofactor evidence="1">
        <name>[2Fe-2S] cluster</name>
        <dbReference type="ChEBI" id="CHEBI:190135"/>
    </cofactor>
</comment>
<comment type="cofactor">
    <cofactor evidence="1">
        <name>[4Fe-4S] cluster</name>
        <dbReference type="ChEBI" id="CHEBI:49883"/>
    </cofactor>
</comment>
<comment type="subunit">
    <text evidence="1">Monomer.</text>
</comment>
<comment type="subcellular location">
    <subcellularLocation>
        <location evidence="1">Cytoplasm</location>
    </subcellularLocation>
    <subcellularLocation>
        <location evidence="1">Mitochondrion intermembrane space</location>
    </subcellularLocation>
</comment>
<comment type="domain">
    <text evidence="1">The C-terminal domain binds 2 Fe-S clusters but is otherwise mostly in an intrinsically disordered conformation.</text>
</comment>
<comment type="domain">
    <text evidence="1">The N-terminal domain has structural similarity with S-adenosyl-L-methionine-dependent methyltransferases, but does not bind S-adenosyl-L-methionine. It is required for correct assembly of the 2 Fe-S clusters.</text>
</comment>
<comment type="domain">
    <text evidence="1">The twin Cx2C motifs are involved in the recognition by the mitochondrial MIA40-ERV1 disulfide relay system. The formation of 2 disulfide bonds in the Cx2C motifs through dithiol/disulfide exchange reactions effectively traps the protein in the mitochondrial intermembrane space.</text>
</comment>
<comment type="similarity">
    <text evidence="1">Belongs to the anamorsin family.</text>
</comment>